<organism>
    <name type="scientific">Dictyostelium discoideum</name>
    <name type="common">Social amoeba</name>
    <dbReference type="NCBI Taxonomy" id="44689"/>
    <lineage>
        <taxon>Eukaryota</taxon>
        <taxon>Amoebozoa</taxon>
        <taxon>Evosea</taxon>
        <taxon>Eumycetozoa</taxon>
        <taxon>Dictyostelia</taxon>
        <taxon>Dictyosteliales</taxon>
        <taxon>Dictyosteliaceae</taxon>
        <taxon>Dictyostelium</taxon>
    </lineage>
</organism>
<keyword id="KW-0378">Hydrolase</keyword>
<keyword id="KW-1185">Reference proteome</keyword>
<keyword id="KW-0677">Repeat</keyword>
<keyword id="KW-0853">WD repeat</keyword>
<sequence>MTEIIKNTKYLDYTSDSVEFYPFNNNIFVCGTYEIEKGDTEYKERRKGKLYLFEIEEEQQQKENDNNNENNNNNKLFKEIQNINFNSGILDMKWNNNKDRILGVVMSKGELNIYQYDEVEKKLELKSSTEISLSNDILSLSLDWNKSGDKLICSFSDGNIGLFKVTKDYSKVTEEKRWKAHDYEAWICAFNYHDESIVFSGGDDCKFKIWDLNQLLNHNDDDIGIPPTPKFTKRCDMGVTSIHCHPTIENLIAVGSYDECLRIWDLKSLKQPIITTDSLGGGIWRIKWHPFQKNKLVTACMGGGFHILSTDPENINDFSTLQIEQSYNGPHKSIAYGVDWSFNKNNFDKQFIGCCSFYDKCLSIWIP</sequence>
<comment type="function">
    <text evidence="2">Catalyzes the demethylation of diphthine methyl ester to form diphthine, an intermediate diphthamide biosynthesis, a post-translational modification of histidine which occurs in translation elongation factor 2 (efbA).</text>
</comment>
<comment type="catalytic activity">
    <reaction evidence="1">
        <text>diphthine methyl ester-[translation elongation factor 2] + H2O = diphthine-[translation elongation factor 2] + methanol + H(+)</text>
        <dbReference type="Rhea" id="RHEA:42656"/>
        <dbReference type="Rhea" id="RHEA-COMP:10172"/>
        <dbReference type="Rhea" id="RHEA-COMP:10173"/>
        <dbReference type="ChEBI" id="CHEBI:15377"/>
        <dbReference type="ChEBI" id="CHEBI:15378"/>
        <dbReference type="ChEBI" id="CHEBI:17790"/>
        <dbReference type="ChEBI" id="CHEBI:79005"/>
        <dbReference type="ChEBI" id="CHEBI:82696"/>
        <dbReference type="EC" id="3.1.1.97"/>
    </reaction>
</comment>
<comment type="pathway">
    <text>Protein modification; peptidyl-diphthamide biosynthesis.</text>
</comment>
<comment type="similarity">
    <text evidence="3">Belongs to the DPH7 family.</text>
</comment>
<feature type="chain" id="PRO_0000330844" description="Diphthine methyltransferase homolog">
    <location>
        <begin position="1"/>
        <end position="367"/>
    </location>
</feature>
<feature type="repeat" description="WD 1">
    <location>
        <begin position="84"/>
        <end position="124"/>
    </location>
</feature>
<feature type="repeat" description="WD 2">
    <location>
        <begin position="132"/>
        <end position="173"/>
    </location>
</feature>
<feature type="repeat" description="WD 3">
    <location>
        <begin position="180"/>
        <end position="220"/>
    </location>
</feature>
<feature type="repeat" description="WD 4">
    <location>
        <begin position="234"/>
        <end position="274"/>
    </location>
</feature>
<accession>Q55C80</accession>
<proteinExistence type="inferred from homology"/>
<gene>
    <name type="primary">wdr85</name>
    <name type="ORF">DDB_G0270178</name>
</gene>
<dbReference type="EC" id="3.1.1.97"/>
<dbReference type="EMBL" id="AAFI02000005">
    <property type="protein sequence ID" value="EAL72439.1"/>
    <property type="molecule type" value="Genomic_DNA"/>
</dbReference>
<dbReference type="RefSeq" id="XP_646601.1">
    <property type="nucleotide sequence ID" value="XM_641509.1"/>
</dbReference>
<dbReference type="SMR" id="Q55C80"/>
<dbReference type="FunCoup" id="Q55C80">
    <property type="interactions" value="417"/>
</dbReference>
<dbReference type="STRING" id="44689.Q55C80"/>
<dbReference type="GlyGen" id="Q55C80">
    <property type="glycosylation" value="1 site"/>
</dbReference>
<dbReference type="PaxDb" id="44689-DDB0267165"/>
<dbReference type="EnsemblProtists" id="EAL72439">
    <property type="protein sequence ID" value="EAL72439"/>
    <property type="gene ID" value="DDB_G0270178"/>
</dbReference>
<dbReference type="GeneID" id="8617573"/>
<dbReference type="KEGG" id="ddi:DDB_G0270178"/>
<dbReference type="dictyBase" id="DDB_G0270178">
    <property type="gene designation" value="wdr85"/>
</dbReference>
<dbReference type="VEuPathDB" id="AmoebaDB:DDB_G0270178"/>
<dbReference type="eggNOG" id="KOG0280">
    <property type="taxonomic scope" value="Eukaryota"/>
</dbReference>
<dbReference type="HOGENOM" id="CLU_036100_2_0_1"/>
<dbReference type="InParanoid" id="Q55C80"/>
<dbReference type="OMA" id="LDMKWLP"/>
<dbReference type="PhylomeDB" id="Q55C80"/>
<dbReference type="UniPathway" id="UPA00559"/>
<dbReference type="PRO" id="PR:Q55C80"/>
<dbReference type="Proteomes" id="UP000002195">
    <property type="component" value="Chromosome 1"/>
</dbReference>
<dbReference type="GO" id="GO:0005737">
    <property type="term" value="C:cytoplasm"/>
    <property type="evidence" value="ECO:0000318"/>
    <property type="project" value="GO_Central"/>
</dbReference>
<dbReference type="GO" id="GO:0061685">
    <property type="term" value="F:diphthine methylesterase activity"/>
    <property type="evidence" value="ECO:0000318"/>
    <property type="project" value="GO_Central"/>
</dbReference>
<dbReference type="GO" id="GO:0017183">
    <property type="term" value="P:protein histidyl modification to diphthamide"/>
    <property type="evidence" value="ECO:0000318"/>
    <property type="project" value="GO_Central"/>
</dbReference>
<dbReference type="Gene3D" id="2.130.10.10">
    <property type="entry name" value="YVTN repeat-like/Quinoprotein amine dehydrogenase"/>
    <property type="match status" value="1"/>
</dbReference>
<dbReference type="InterPro" id="IPR052415">
    <property type="entry name" value="Diphthine_MTase"/>
</dbReference>
<dbReference type="InterPro" id="IPR015943">
    <property type="entry name" value="WD40/YVTN_repeat-like_dom_sf"/>
</dbReference>
<dbReference type="InterPro" id="IPR036322">
    <property type="entry name" value="WD40_repeat_dom_sf"/>
</dbReference>
<dbReference type="InterPro" id="IPR001680">
    <property type="entry name" value="WD40_rpt"/>
</dbReference>
<dbReference type="PANTHER" id="PTHR46042">
    <property type="entry name" value="DIPHTHINE METHYLTRANSFERASE"/>
    <property type="match status" value="1"/>
</dbReference>
<dbReference type="PANTHER" id="PTHR46042:SF1">
    <property type="entry name" value="DIPHTHINE METHYLTRANSFERASE"/>
    <property type="match status" value="1"/>
</dbReference>
<dbReference type="Pfam" id="PF00400">
    <property type="entry name" value="WD40"/>
    <property type="match status" value="2"/>
</dbReference>
<dbReference type="SMART" id="SM00320">
    <property type="entry name" value="WD40"/>
    <property type="match status" value="5"/>
</dbReference>
<dbReference type="SUPFAM" id="SSF50978">
    <property type="entry name" value="WD40 repeat-like"/>
    <property type="match status" value="1"/>
</dbReference>
<dbReference type="PROSITE" id="PS50294">
    <property type="entry name" value="WD_REPEATS_REGION"/>
    <property type="match status" value="1"/>
</dbReference>
<reference key="1">
    <citation type="journal article" date="2005" name="Nature">
        <title>The genome of the social amoeba Dictyostelium discoideum.</title>
        <authorList>
            <person name="Eichinger L."/>
            <person name="Pachebat J.A."/>
            <person name="Gloeckner G."/>
            <person name="Rajandream M.A."/>
            <person name="Sucgang R."/>
            <person name="Berriman M."/>
            <person name="Song J."/>
            <person name="Olsen R."/>
            <person name="Szafranski K."/>
            <person name="Xu Q."/>
            <person name="Tunggal B."/>
            <person name="Kummerfeld S."/>
            <person name="Madera M."/>
            <person name="Konfortov B.A."/>
            <person name="Rivero F."/>
            <person name="Bankier A.T."/>
            <person name="Lehmann R."/>
            <person name="Hamlin N."/>
            <person name="Davies R."/>
            <person name="Gaudet P."/>
            <person name="Fey P."/>
            <person name="Pilcher K."/>
            <person name="Chen G."/>
            <person name="Saunders D."/>
            <person name="Sodergren E.J."/>
            <person name="Davis P."/>
            <person name="Kerhornou A."/>
            <person name="Nie X."/>
            <person name="Hall N."/>
            <person name="Anjard C."/>
            <person name="Hemphill L."/>
            <person name="Bason N."/>
            <person name="Farbrother P."/>
            <person name="Desany B."/>
            <person name="Just E."/>
            <person name="Morio T."/>
            <person name="Rost R."/>
            <person name="Churcher C.M."/>
            <person name="Cooper J."/>
            <person name="Haydock S."/>
            <person name="van Driessche N."/>
            <person name="Cronin A."/>
            <person name="Goodhead I."/>
            <person name="Muzny D.M."/>
            <person name="Mourier T."/>
            <person name="Pain A."/>
            <person name="Lu M."/>
            <person name="Harper D."/>
            <person name="Lindsay R."/>
            <person name="Hauser H."/>
            <person name="James K.D."/>
            <person name="Quiles M."/>
            <person name="Madan Babu M."/>
            <person name="Saito T."/>
            <person name="Buchrieser C."/>
            <person name="Wardroper A."/>
            <person name="Felder M."/>
            <person name="Thangavelu M."/>
            <person name="Johnson D."/>
            <person name="Knights A."/>
            <person name="Loulseged H."/>
            <person name="Mungall K.L."/>
            <person name="Oliver K."/>
            <person name="Price C."/>
            <person name="Quail M.A."/>
            <person name="Urushihara H."/>
            <person name="Hernandez J."/>
            <person name="Rabbinowitsch E."/>
            <person name="Steffen D."/>
            <person name="Sanders M."/>
            <person name="Ma J."/>
            <person name="Kohara Y."/>
            <person name="Sharp S."/>
            <person name="Simmonds M.N."/>
            <person name="Spiegler S."/>
            <person name="Tivey A."/>
            <person name="Sugano S."/>
            <person name="White B."/>
            <person name="Walker D."/>
            <person name="Woodward J.R."/>
            <person name="Winckler T."/>
            <person name="Tanaka Y."/>
            <person name="Shaulsky G."/>
            <person name="Schleicher M."/>
            <person name="Weinstock G.M."/>
            <person name="Rosenthal A."/>
            <person name="Cox E.C."/>
            <person name="Chisholm R.L."/>
            <person name="Gibbs R.A."/>
            <person name="Loomis W.F."/>
            <person name="Platzer M."/>
            <person name="Kay R.R."/>
            <person name="Williams J.G."/>
            <person name="Dear P.H."/>
            <person name="Noegel A.A."/>
            <person name="Barrell B.G."/>
            <person name="Kuspa A."/>
        </authorList>
    </citation>
    <scope>NUCLEOTIDE SEQUENCE [LARGE SCALE GENOMIC DNA]</scope>
    <source>
        <strain>AX4</strain>
    </source>
</reference>
<protein>
    <recommendedName>
        <fullName>Diphthine methyltransferase homolog</fullName>
        <ecNumber>3.1.1.97</ecNumber>
    </recommendedName>
    <alternativeName>
        <fullName>Diphthamide biosynthesis protein 7 homolog</fullName>
    </alternativeName>
    <alternativeName>
        <fullName>WD repeat-containing protein 85 homolog</fullName>
    </alternativeName>
</protein>
<name>DPH7_DICDI</name>
<evidence type="ECO:0000250" key="1">
    <source>
        <dbReference type="UniProtKB" id="P38332"/>
    </source>
</evidence>
<evidence type="ECO:0000250" key="2">
    <source>
        <dbReference type="UniProtKB" id="Q9BTV6"/>
    </source>
</evidence>
<evidence type="ECO:0000305" key="3"/>